<evidence type="ECO:0000255" key="1">
    <source>
        <dbReference type="HAMAP-Rule" id="MF_01416"/>
    </source>
</evidence>
<keyword id="KW-0066">ATP synthesis</keyword>
<keyword id="KW-1003">Cell membrane</keyword>
<keyword id="KW-0139">CF(1)</keyword>
<keyword id="KW-0375">Hydrogen ion transport</keyword>
<keyword id="KW-0406">Ion transport</keyword>
<keyword id="KW-0472">Membrane</keyword>
<keyword id="KW-1185">Reference proteome</keyword>
<keyword id="KW-0813">Transport</keyword>
<organism>
    <name type="scientific">Clostridium acetobutylicum (strain ATCC 824 / DSM 792 / JCM 1419 / IAM 19013 / LMG 5710 / NBRC 13948 / NRRL B-527 / VKM B-1787 / 2291 / W)</name>
    <dbReference type="NCBI Taxonomy" id="272562"/>
    <lineage>
        <taxon>Bacteria</taxon>
        <taxon>Bacillati</taxon>
        <taxon>Bacillota</taxon>
        <taxon>Clostridia</taxon>
        <taxon>Eubacteriales</taxon>
        <taxon>Clostridiaceae</taxon>
        <taxon>Clostridium</taxon>
    </lineage>
</organism>
<name>ATPD_CLOAB</name>
<comment type="function">
    <text evidence="1">F(1)F(0) ATP synthase produces ATP from ADP in the presence of a proton or sodium gradient. F-type ATPases consist of two structural domains, F(1) containing the extramembraneous catalytic core and F(0) containing the membrane proton channel, linked together by a central stalk and a peripheral stalk. During catalysis, ATP synthesis in the catalytic domain of F(1) is coupled via a rotary mechanism of the central stalk subunits to proton translocation.</text>
</comment>
<comment type="function">
    <text evidence="1">This protein is part of the stalk that links CF(0) to CF(1). It either transmits conformational changes from CF(0) to CF(1) or is implicated in proton conduction.</text>
</comment>
<comment type="subunit">
    <text evidence="1">F-type ATPases have 2 components, F(1) - the catalytic core - and F(0) - the membrane proton channel. F(1) has five subunits: alpha(3), beta(3), gamma(1), delta(1), epsilon(1). F(0) has three main subunits: a(1), b(2) and c(10-14). The alpha and beta chains form an alternating ring which encloses part of the gamma chain. F(1) is attached to F(0) by a central stalk formed by the gamma and epsilon chains, while a peripheral stalk is formed by the delta and b chains.</text>
</comment>
<comment type="subcellular location">
    <subcellularLocation>
        <location evidence="1">Cell membrane</location>
        <topology evidence="1">Peripheral membrane protein</topology>
    </subcellularLocation>
</comment>
<comment type="similarity">
    <text evidence="1">Belongs to the ATPase delta chain family.</text>
</comment>
<reference key="1">
    <citation type="journal article" date="2000" name="DNA Seq.">
        <title>Sequence analysis of the atp operon of Clostridium acetobutylicum DSM 792 encoding the F0F1 ATP synthase.</title>
        <authorList>
            <person name="Externbrink T."/>
            <person name="Hujer S."/>
            <person name="Winzer K."/>
            <person name="Duerre P."/>
        </authorList>
    </citation>
    <scope>NUCLEOTIDE SEQUENCE [GENOMIC DNA]</scope>
    <source>
        <strain>ATCC 824 / DSM 792 / JCM 1419 / IAM 19013 / LMG 5710 / NBRC 13948 / NRRL B-527 / VKM B-1787 / 2291 / W</strain>
    </source>
</reference>
<reference key="2">
    <citation type="journal article" date="2001" name="J. Bacteriol.">
        <title>Genome sequence and comparative analysis of the solvent-producing bacterium Clostridium acetobutylicum.</title>
        <authorList>
            <person name="Noelling J."/>
            <person name="Breton G."/>
            <person name="Omelchenko M.V."/>
            <person name="Makarova K.S."/>
            <person name="Zeng Q."/>
            <person name="Gibson R."/>
            <person name="Lee H.M."/>
            <person name="Dubois J."/>
            <person name="Qiu D."/>
            <person name="Hitti J."/>
            <person name="Wolf Y.I."/>
            <person name="Tatusov R.L."/>
            <person name="Sabathe F."/>
            <person name="Doucette-Stamm L.A."/>
            <person name="Soucaille P."/>
            <person name="Daly M.J."/>
            <person name="Bennett G.N."/>
            <person name="Koonin E.V."/>
            <person name="Smith D.R."/>
        </authorList>
    </citation>
    <scope>NUCLEOTIDE SEQUENCE [LARGE SCALE GENOMIC DNA]</scope>
    <source>
        <strain>ATCC 824 / DSM 792 / JCM 1419 / IAM 19013 / LMG 5710 / NBRC 13948 / NRRL B-527 / VKM B-1787 / 2291 / W</strain>
    </source>
</reference>
<protein>
    <recommendedName>
        <fullName evidence="1">ATP synthase subunit delta</fullName>
    </recommendedName>
    <alternativeName>
        <fullName evidence="1">ATP synthase F(1) sector subunit delta</fullName>
    </alternativeName>
    <alternativeName>
        <fullName evidence="1">F-type ATPase subunit delta</fullName>
        <shortName evidence="1">F-ATPase subunit delta</shortName>
    </alternativeName>
</protein>
<feature type="chain" id="PRO_0000370943" description="ATP synthase subunit delta">
    <location>
        <begin position="1"/>
        <end position="179"/>
    </location>
</feature>
<dbReference type="EMBL" id="AF101055">
    <property type="protein sequence ID" value="AAD16423.1"/>
    <property type="molecule type" value="Genomic_DNA"/>
</dbReference>
<dbReference type="EMBL" id="AE001437">
    <property type="protein sequence ID" value="AAK80811.1"/>
    <property type="molecule type" value="Genomic_DNA"/>
</dbReference>
<dbReference type="PIR" id="H97252">
    <property type="entry name" value="H97252"/>
</dbReference>
<dbReference type="RefSeq" id="NP_349471.1">
    <property type="nucleotide sequence ID" value="NC_003030.1"/>
</dbReference>
<dbReference type="RefSeq" id="WP_010966152.1">
    <property type="nucleotide sequence ID" value="NC_003030.1"/>
</dbReference>
<dbReference type="SMR" id="Q9Z690"/>
<dbReference type="STRING" id="272562.CA_C2868"/>
<dbReference type="KEGG" id="cac:CA_C2868"/>
<dbReference type="PATRIC" id="fig|272562.8.peg.3052"/>
<dbReference type="eggNOG" id="COG0712">
    <property type="taxonomic scope" value="Bacteria"/>
</dbReference>
<dbReference type="HOGENOM" id="CLU_085114_4_0_9"/>
<dbReference type="OrthoDB" id="9802471at2"/>
<dbReference type="Proteomes" id="UP000000814">
    <property type="component" value="Chromosome"/>
</dbReference>
<dbReference type="GO" id="GO:0005886">
    <property type="term" value="C:plasma membrane"/>
    <property type="evidence" value="ECO:0007669"/>
    <property type="project" value="UniProtKB-SubCell"/>
</dbReference>
<dbReference type="GO" id="GO:0045259">
    <property type="term" value="C:proton-transporting ATP synthase complex"/>
    <property type="evidence" value="ECO:0007669"/>
    <property type="project" value="UniProtKB-KW"/>
</dbReference>
<dbReference type="GO" id="GO:0046933">
    <property type="term" value="F:proton-transporting ATP synthase activity, rotational mechanism"/>
    <property type="evidence" value="ECO:0007669"/>
    <property type="project" value="UniProtKB-UniRule"/>
</dbReference>
<dbReference type="Gene3D" id="1.10.520.20">
    <property type="entry name" value="N-terminal domain of the delta subunit of the F1F0-ATP synthase"/>
    <property type="match status" value="1"/>
</dbReference>
<dbReference type="HAMAP" id="MF_01416">
    <property type="entry name" value="ATP_synth_delta_bact"/>
    <property type="match status" value="1"/>
</dbReference>
<dbReference type="InterPro" id="IPR026015">
    <property type="entry name" value="ATP_synth_OSCP/delta_N_sf"/>
</dbReference>
<dbReference type="InterPro" id="IPR020781">
    <property type="entry name" value="ATPase_OSCP/d_CS"/>
</dbReference>
<dbReference type="InterPro" id="IPR000711">
    <property type="entry name" value="ATPase_OSCP/dsu"/>
</dbReference>
<dbReference type="NCBIfam" id="TIGR01145">
    <property type="entry name" value="ATP_synt_delta"/>
    <property type="match status" value="1"/>
</dbReference>
<dbReference type="NCBIfam" id="NF004403">
    <property type="entry name" value="PRK05758.2-4"/>
    <property type="match status" value="1"/>
</dbReference>
<dbReference type="PANTHER" id="PTHR11910">
    <property type="entry name" value="ATP SYNTHASE DELTA CHAIN"/>
    <property type="match status" value="1"/>
</dbReference>
<dbReference type="Pfam" id="PF00213">
    <property type="entry name" value="OSCP"/>
    <property type="match status" value="1"/>
</dbReference>
<dbReference type="PRINTS" id="PR00125">
    <property type="entry name" value="ATPASEDELTA"/>
</dbReference>
<dbReference type="SUPFAM" id="SSF47928">
    <property type="entry name" value="N-terminal domain of the delta subunit of the F1F0-ATP synthase"/>
    <property type="match status" value="1"/>
</dbReference>
<dbReference type="PROSITE" id="PS00389">
    <property type="entry name" value="ATPASE_DELTA"/>
    <property type="match status" value="1"/>
</dbReference>
<gene>
    <name evidence="1" type="primary">atpH</name>
    <name type="ordered locus">CA_C2868</name>
</gene>
<accession>Q9Z690</accession>
<sequence length="179" mass="20794">MYEFLDRRYALALYEVGEKNQKLEEYINDFGEIVHLLKNDENINQVVNHPQISTSEKKKIFMEIFKGKIDEKLLNFLLLLLEKKRIHDAEGILTQLNKISLEKHNKVVAEVRTVIPLTDNEKTTLASKLSAKYNKIIIFKEIIDKTIIGGVYVRVGDDVIDGTIKFKLESMKKVMLKEE</sequence>
<proteinExistence type="inferred from homology"/>